<name>NS7B_BCHK3</name>
<protein>
    <recommendedName>
        <fullName>Non-structural protein 7b</fullName>
        <shortName>ns7b</shortName>
    </recommendedName>
    <alternativeName>
        <fullName>Accessory protein 7b</fullName>
    </alternativeName>
</protein>
<evidence type="ECO:0000255" key="1"/>
<evidence type="ECO:0000305" key="2"/>
<comment type="subcellular location">
    <subcellularLocation>
        <location evidence="2">Host membrane</location>
        <topology evidence="2">Single-pass membrane protein</topology>
    </subcellularLocation>
</comment>
<comment type="miscellaneous">
    <text>Bat coronavirus HKU3 is highly similar to SARS-CoV (SARS-like).</text>
</comment>
<feature type="chain" id="PRO_0000291332" description="Non-structural protein 7b">
    <location>
        <begin position="1"/>
        <end position="44"/>
    </location>
</feature>
<feature type="transmembrane region" description="Helical" evidence="1">
    <location>
        <begin position="9"/>
        <end position="29"/>
    </location>
</feature>
<organism>
    <name type="scientific">Bat coronavirus HKU3</name>
    <name type="common">BtCoV</name>
    <name type="synonym">SARS-like coronavirus HKU3</name>
    <dbReference type="NCBI Taxonomy" id="442736"/>
    <lineage>
        <taxon>Viruses</taxon>
        <taxon>Riboviria</taxon>
        <taxon>Orthornavirae</taxon>
        <taxon>Pisuviricota</taxon>
        <taxon>Pisoniviricetes</taxon>
        <taxon>Nidovirales</taxon>
        <taxon>Cornidovirineae</taxon>
        <taxon>Coronaviridae</taxon>
        <taxon>Orthocoronavirinae</taxon>
        <taxon>Betacoronavirus</taxon>
        <taxon>Sarbecovirus</taxon>
        <taxon>Severe acute respiratory syndrome coronavirus</taxon>
    </lineage>
</organism>
<dbReference type="EMBL" id="DQ022305">
    <property type="protein sequence ID" value="AAY88872.1"/>
    <property type="molecule type" value="Genomic_RNA"/>
</dbReference>
<dbReference type="SMR" id="Q3LZX6"/>
<dbReference type="TCDB" id="1.A.127.1.3">
    <property type="family name" value="the sars-cov-2 orf7b viroporin (orf7b viroporin) family"/>
</dbReference>
<dbReference type="Proteomes" id="UP000007450">
    <property type="component" value="Segment"/>
</dbReference>
<dbReference type="GO" id="GO:0033644">
    <property type="term" value="C:host cell membrane"/>
    <property type="evidence" value="ECO:0007669"/>
    <property type="project" value="UniProtKB-SubCell"/>
</dbReference>
<dbReference type="GO" id="GO:0016020">
    <property type="term" value="C:membrane"/>
    <property type="evidence" value="ECO:0007669"/>
    <property type="project" value="UniProtKB-KW"/>
</dbReference>
<dbReference type="CDD" id="cd21635">
    <property type="entry name" value="ORF7b_SARS-CoV-like"/>
    <property type="match status" value="1"/>
</dbReference>
<dbReference type="InterPro" id="IPR021532">
    <property type="entry name" value="NS7B_bCoV"/>
</dbReference>
<dbReference type="InterPro" id="IPR044394">
    <property type="entry name" value="ORF7b_SARS-CoV-like"/>
</dbReference>
<dbReference type="Pfam" id="PF11395">
    <property type="entry name" value="bCoV_NS7B"/>
    <property type="match status" value="1"/>
</dbReference>
<sequence>MNELTLIDFYLCFLAFLLFLVLIMLLIFWFSLEIQDIEEPCNKV</sequence>
<gene>
    <name type="ORF">7b</name>
</gene>
<organismHost>
    <name type="scientific">Rhinolophus sinicus</name>
    <name type="common">Chinese rufous horseshoe bat</name>
    <dbReference type="NCBI Taxonomy" id="89399"/>
</organismHost>
<proteinExistence type="predicted"/>
<reference key="1">
    <citation type="journal article" date="2005" name="Proc. Natl. Acad. Sci. U.S.A.">
        <title>Severe acute respiratory syndrome coronavirus-like virus in Chinese horseshoe bats.</title>
        <authorList>
            <person name="Lau S.K.P."/>
            <person name="Woo P.C.Y."/>
            <person name="Li K.S.M."/>
            <person name="Huang Y."/>
            <person name="Tsoi H.-W."/>
            <person name="Wong B.H.L."/>
            <person name="Wong S.S.Y."/>
            <person name="Leung S.-Y."/>
            <person name="Chan K.-H."/>
            <person name="Yuen K.-Y."/>
        </authorList>
    </citation>
    <scope>NUCLEOTIDE SEQUENCE [GENOMIC RNA]</scope>
    <source>
        <strain>Isolate HKU3-1</strain>
    </source>
</reference>
<keyword id="KW-1043">Host membrane</keyword>
<keyword id="KW-0472">Membrane</keyword>
<keyword id="KW-0812">Transmembrane</keyword>
<keyword id="KW-1133">Transmembrane helix</keyword>
<accession>Q3LZX6</accession>